<accession>Q46X89</accession>
<gene>
    <name evidence="1" type="primary">rdgC</name>
    <name type="ordered locus">Reut_A2883</name>
</gene>
<organism>
    <name type="scientific">Cupriavidus pinatubonensis (strain JMP 134 / LMG 1197)</name>
    <name type="common">Cupriavidus necator (strain JMP 134)</name>
    <dbReference type="NCBI Taxonomy" id="264198"/>
    <lineage>
        <taxon>Bacteria</taxon>
        <taxon>Pseudomonadati</taxon>
        <taxon>Pseudomonadota</taxon>
        <taxon>Betaproteobacteria</taxon>
        <taxon>Burkholderiales</taxon>
        <taxon>Burkholderiaceae</taxon>
        <taxon>Cupriavidus</taxon>
    </lineage>
</organism>
<keyword id="KW-0963">Cytoplasm</keyword>
<keyword id="KW-0233">DNA recombination</keyword>
<feature type="chain" id="PRO_1000021226" description="Recombination-associated protein RdgC">
    <location>
        <begin position="1"/>
        <end position="299"/>
    </location>
</feature>
<sequence length="299" mass="33206">MWFKNLQLHRFSAPWSPSADEVEASLAKHAFFPGTSLEMQTQGWASPRDNGQLVHAVGRQMLLTLRTEKKLLPATVVNQVTKARAAEVEEQQGYKPGRKQLRELKEQVTEELLPRAFSIRRDTRVWIDPDNGWLAIDAASTAKADEVRGMLFKALDALPLANLHVNQSPVAAMTDWLSTDVAPAGFTVDQEIELQSGSESKATVRYVRHPLDAEDLRRHISGGKRCTRLAMTWNDRVSFVLTDSLAIKRVAPLDVIKEQADGTVSDEDERFDADFTLMAGELAGMLGDLTEALGGERKA</sequence>
<reference key="1">
    <citation type="journal article" date="2010" name="PLoS ONE">
        <title>The complete multipartite genome sequence of Cupriavidus necator JMP134, a versatile pollutant degrader.</title>
        <authorList>
            <person name="Lykidis A."/>
            <person name="Perez-Pantoja D."/>
            <person name="Ledger T."/>
            <person name="Mavromatis K."/>
            <person name="Anderson I.J."/>
            <person name="Ivanova N.N."/>
            <person name="Hooper S.D."/>
            <person name="Lapidus A."/>
            <person name="Lucas S."/>
            <person name="Gonzalez B."/>
            <person name="Kyrpides N.C."/>
        </authorList>
    </citation>
    <scope>NUCLEOTIDE SEQUENCE [LARGE SCALE GENOMIC DNA]</scope>
    <source>
        <strain>JMP134 / LMG 1197</strain>
    </source>
</reference>
<protein>
    <recommendedName>
        <fullName evidence="1">Recombination-associated protein RdgC</fullName>
    </recommendedName>
</protein>
<dbReference type="EMBL" id="CP000090">
    <property type="protein sequence ID" value="AAZ62244.1"/>
    <property type="molecule type" value="Genomic_DNA"/>
</dbReference>
<dbReference type="SMR" id="Q46X89"/>
<dbReference type="STRING" id="264198.Reut_A2883"/>
<dbReference type="DNASU" id="3611021"/>
<dbReference type="KEGG" id="reu:Reut_A2883"/>
<dbReference type="eggNOG" id="COG2974">
    <property type="taxonomic scope" value="Bacteria"/>
</dbReference>
<dbReference type="HOGENOM" id="CLU_052038_1_1_4"/>
<dbReference type="OrthoDB" id="5290530at2"/>
<dbReference type="GO" id="GO:0043590">
    <property type="term" value="C:bacterial nucleoid"/>
    <property type="evidence" value="ECO:0007669"/>
    <property type="project" value="TreeGrafter"/>
</dbReference>
<dbReference type="GO" id="GO:0005737">
    <property type="term" value="C:cytoplasm"/>
    <property type="evidence" value="ECO:0007669"/>
    <property type="project" value="UniProtKB-UniRule"/>
</dbReference>
<dbReference type="GO" id="GO:0003690">
    <property type="term" value="F:double-stranded DNA binding"/>
    <property type="evidence" value="ECO:0007669"/>
    <property type="project" value="TreeGrafter"/>
</dbReference>
<dbReference type="GO" id="GO:0006310">
    <property type="term" value="P:DNA recombination"/>
    <property type="evidence" value="ECO:0007669"/>
    <property type="project" value="UniProtKB-UniRule"/>
</dbReference>
<dbReference type="GO" id="GO:0000018">
    <property type="term" value="P:regulation of DNA recombination"/>
    <property type="evidence" value="ECO:0007669"/>
    <property type="project" value="TreeGrafter"/>
</dbReference>
<dbReference type="HAMAP" id="MF_00194">
    <property type="entry name" value="RdgC"/>
    <property type="match status" value="1"/>
</dbReference>
<dbReference type="InterPro" id="IPR007476">
    <property type="entry name" value="RdgC"/>
</dbReference>
<dbReference type="NCBIfam" id="NF001463">
    <property type="entry name" value="PRK00321.1-4"/>
    <property type="match status" value="1"/>
</dbReference>
<dbReference type="NCBIfam" id="NF001464">
    <property type="entry name" value="PRK00321.1-5"/>
    <property type="match status" value="1"/>
</dbReference>
<dbReference type="PANTHER" id="PTHR38103">
    <property type="entry name" value="RECOMBINATION-ASSOCIATED PROTEIN RDGC"/>
    <property type="match status" value="1"/>
</dbReference>
<dbReference type="PANTHER" id="PTHR38103:SF1">
    <property type="entry name" value="RECOMBINATION-ASSOCIATED PROTEIN RDGC"/>
    <property type="match status" value="1"/>
</dbReference>
<dbReference type="Pfam" id="PF04381">
    <property type="entry name" value="RdgC"/>
    <property type="match status" value="1"/>
</dbReference>
<name>RDGC_CUPPJ</name>
<comment type="function">
    <text evidence="1">May be involved in recombination.</text>
</comment>
<comment type="subcellular location">
    <subcellularLocation>
        <location evidence="1">Cytoplasm</location>
        <location evidence="1">Nucleoid</location>
    </subcellularLocation>
</comment>
<comment type="similarity">
    <text evidence="1">Belongs to the RdgC family.</text>
</comment>
<evidence type="ECO:0000255" key="1">
    <source>
        <dbReference type="HAMAP-Rule" id="MF_00194"/>
    </source>
</evidence>
<proteinExistence type="inferred from homology"/>